<gene>
    <name evidence="1" type="primary">aroC</name>
    <name type="ordered locus">CFPG_655</name>
</gene>
<name>AROC_AZOPC</name>
<accession>B6YRU6</accession>
<keyword id="KW-0028">Amino-acid biosynthesis</keyword>
<keyword id="KW-0057">Aromatic amino acid biosynthesis</keyword>
<keyword id="KW-0274">FAD</keyword>
<keyword id="KW-0285">Flavoprotein</keyword>
<keyword id="KW-0288">FMN</keyword>
<keyword id="KW-0456">Lyase</keyword>
<keyword id="KW-0521">NADP</keyword>
<keyword id="KW-1185">Reference proteome</keyword>
<protein>
    <recommendedName>
        <fullName evidence="1">Chorismate synthase</fullName>
        <shortName evidence="1">CS</shortName>
        <ecNumber evidence="1">4.2.3.5</ecNumber>
    </recommendedName>
    <alternativeName>
        <fullName evidence="1">5-enolpyruvylshikimate-3-phosphate phospholyase</fullName>
    </alternativeName>
</protein>
<feature type="chain" id="PRO_1000115327" description="Chorismate synthase">
    <location>
        <begin position="1"/>
        <end position="354"/>
    </location>
</feature>
<feature type="binding site" evidence="1">
    <location>
        <position position="46"/>
    </location>
    <ligand>
        <name>NADP(+)</name>
        <dbReference type="ChEBI" id="CHEBI:58349"/>
    </ligand>
</feature>
<feature type="binding site" evidence="1">
    <location>
        <begin position="123"/>
        <end position="125"/>
    </location>
    <ligand>
        <name>FMN</name>
        <dbReference type="ChEBI" id="CHEBI:58210"/>
    </ligand>
</feature>
<feature type="binding site" evidence="1">
    <location>
        <begin position="239"/>
        <end position="240"/>
    </location>
    <ligand>
        <name>FMN</name>
        <dbReference type="ChEBI" id="CHEBI:58210"/>
    </ligand>
</feature>
<feature type="binding site" evidence="1">
    <location>
        <position position="284"/>
    </location>
    <ligand>
        <name>FMN</name>
        <dbReference type="ChEBI" id="CHEBI:58210"/>
    </ligand>
</feature>
<feature type="binding site" evidence="1">
    <location>
        <begin position="299"/>
        <end position="303"/>
    </location>
    <ligand>
        <name>FMN</name>
        <dbReference type="ChEBI" id="CHEBI:58210"/>
    </ligand>
</feature>
<feature type="binding site" evidence="1">
    <location>
        <position position="325"/>
    </location>
    <ligand>
        <name>FMN</name>
        <dbReference type="ChEBI" id="CHEBI:58210"/>
    </ligand>
</feature>
<organism>
    <name type="scientific">Azobacteroides pseudotrichonymphae genomovar. CFP2</name>
    <dbReference type="NCBI Taxonomy" id="511995"/>
    <lineage>
        <taxon>Bacteria</taxon>
        <taxon>Pseudomonadati</taxon>
        <taxon>Bacteroidota</taxon>
        <taxon>Bacteroidia</taxon>
        <taxon>Bacteroidales</taxon>
        <taxon>Candidatus Azobacteroides</taxon>
    </lineage>
</organism>
<comment type="function">
    <text evidence="1">Catalyzes the anti-1,4-elimination of the C-3 phosphate and the C-6 proR hydrogen from 5-enolpyruvylshikimate-3-phosphate (EPSP) to yield chorismate, which is the branch point compound that serves as the starting substrate for the three terminal pathways of aromatic amino acid biosynthesis. This reaction introduces a second double bond into the aromatic ring system.</text>
</comment>
<comment type="catalytic activity">
    <reaction evidence="1">
        <text>5-O-(1-carboxyvinyl)-3-phosphoshikimate = chorismate + phosphate</text>
        <dbReference type="Rhea" id="RHEA:21020"/>
        <dbReference type="ChEBI" id="CHEBI:29748"/>
        <dbReference type="ChEBI" id="CHEBI:43474"/>
        <dbReference type="ChEBI" id="CHEBI:57701"/>
        <dbReference type="EC" id="4.2.3.5"/>
    </reaction>
</comment>
<comment type="cofactor">
    <cofactor evidence="1">
        <name>FMNH2</name>
        <dbReference type="ChEBI" id="CHEBI:57618"/>
    </cofactor>
    <text evidence="1">Reduced FMN (FMNH(2)).</text>
</comment>
<comment type="pathway">
    <text evidence="1">Metabolic intermediate biosynthesis; chorismate biosynthesis; chorismate from D-erythrose 4-phosphate and phosphoenolpyruvate: step 7/7.</text>
</comment>
<comment type="subunit">
    <text evidence="1">Homotetramer.</text>
</comment>
<comment type="similarity">
    <text evidence="1">Belongs to the chorismate synthase family.</text>
</comment>
<proteinExistence type="inferred from homology"/>
<reference key="1">
    <citation type="journal article" date="2008" name="Science">
        <title>Genome of an endosymbiont coupling N2 fixation to cellulolysis within RT protist cells in termite gut.</title>
        <authorList>
            <person name="Hongoh Y."/>
            <person name="Sharma V.K."/>
            <person name="Prakash T."/>
            <person name="Noda S."/>
            <person name="Toh H."/>
            <person name="Taylor T.D."/>
            <person name="Kudo T."/>
            <person name="Sakaki Y."/>
            <person name="Toyoda A."/>
            <person name="Hattori M."/>
            <person name="Ohkuma M."/>
        </authorList>
    </citation>
    <scope>NUCLEOTIDE SEQUENCE [LARGE SCALE GENOMIC DNA]</scope>
</reference>
<sequence>MNTFGNIFKLTSFGESHGTAIGGVIDGCPAGIVLDMEFVQGELDKRRPGQSELTTSRNESDKVEFLSGIYEGKTIGTPIGFIVWNNNQHSSDYDSLKNVFRPSHADYTYFQKYRHYDHRGGGRSSARETIARVVAGAIAKLILQKKGIKITAYVSQVGDICLSKSYIQVDFSNIEKTAVRCPDLEIAKQMIALIQSVRLRGDTVGGVITCICHGVPVGLGNPVFGKLSAALSNAMMSINATKGFDYGMGFNGIHRKGSEANDLYYRNKDGKIVTKSNYSGGIQGGISSGEDIYFRVAFKPVATLLQGQLTVDKDGNEIQLEVKGRHDPCVLPRAVPIVESMAAMTILDYYLYNY</sequence>
<evidence type="ECO:0000255" key="1">
    <source>
        <dbReference type="HAMAP-Rule" id="MF_00300"/>
    </source>
</evidence>
<dbReference type="EC" id="4.2.3.5" evidence="1"/>
<dbReference type="EMBL" id="AP010656">
    <property type="protein sequence ID" value="BAG83918.1"/>
    <property type="molecule type" value="Genomic_DNA"/>
</dbReference>
<dbReference type="RefSeq" id="WP_012573678.1">
    <property type="nucleotide sequence ID" value="NC_011565.1"/>
</dbReference>
<dbReference type="SMR" id="B6YRU6"/>
<dbReference type="STRING" id="511995.CFPG_655"/>
<dbReference type="KEGG" id="aps:CFPG_655"/>
<dbReference type="eggNOG" id="COG0082">
    <property type="taxonomic scope" value="Bacteria"/>
</dbReference>
<dbReference type="HOGENOM" id="CLU_034547_0_0_10"/>
<dbReference type="OrthoDB" id="9771806at2"/>
<dbReference type="UniPathway" id="UPA00053">
    <property type="reaction ID" value="UER00090"/>
</dbReference>
<dbReference type="Proteomes" id="UP000000723">
    <property type="component" value="Chromosome"/>
</dbReference>
<dbReference type="GO" id="GO:0005829">
    <property type="term" value="C:cytosol"/>
    <property type="evidence" value="ECO:0007669"/>
    <property type="project" value="TreeGrafter"/>
</dbReference>
<dbReference type="GO" id="GO:0004107">
    <property type="term" value="F:chorismate synthase activity"/>
    <property type="evidence" value="ECO:0007669"/>
    <property type="project" value="UniProtKB-UniRule"/>
</dbReference>
<dbReference type="GO" id="GO:0010181">
    <property type="term" value="F:FMN binding"/>
    <property type="evidence" value="ECO:0007669"/>
    <property type="project" value="TreeGrafter"/>
</dbReference>
<dbReference type="GO" id="GO:0008652">
    <property type="term" value="P:amino acid biosynthetic process"/>
    <property type="evidence" value="ECO:0007669"/>
    <property type="project" value="UniProtKB-KW"/>
</dbReference>
<dbReference type="GO" id="GO:0009073">
    <property type="term" value="P:aromatic amino acid family biosynthetic process"/>
    <property type="evidence" value="ECO:0007669"/>
    <property type="project" value="UniProtKB-KW"/>
</dbReference>
<dbReference type="GO" id="GO:0009423">
    <property type="term" value="P:chorismate biosynthetic process"/>
    <property type="evidence" value="ECO:0007669"/>
    <property type="project" value="UniProtKB-UniRule"/>
</dbReference>
<dbReference type="CDD" id="cd07304">
    <property type="entry name" value="Chorismate_synthase"/>
    <property type="match status" value="1"/>
</dbReference>
<dbReference type="FunFam" id="3.60.150.10:FF:000003">
    <property type="entry name" value="Chorismate synthase"/>
    <property type="match status" value="1"/>
</dbReference>
<dbReference type="Gene3D" id="3.60.150.10">
    <property type="entry name" value="Chorismate synthase AroC"/>
    <property type="match status" value="1"/>
</dbReference>
<dbReference type="HAMAP" id="MF_00300">
    <property type="entry name" value="Chorismate_synth"/>
    <property type="match status" value="1"/>
</dbReference>
<dbReference type="InterPro" id="IPR000453">
    <property type="entry name" value="Chorismate_synth"/>
</dbReference>
<dbReference type="InterPro" id="IPR035904">
    <property type="entry name" value="Chorismate_synth_AroC_sf"/>
</dbReference>
<dbReference type="InterPro" id="IPR020541">
    <property type="entry name" value="Chorismate_synthase_CS"/>
</dbReference>
<dbReference type="NCBIfam" id="TIGR00033">
    <property type="entry name" value="aroC"/>
    <property type="match status" value="1"/>
</dbReference>
<dbReference type="NCBIfam" id="NF003793">
    <property type="entry name" value="PRK05382.1"/>
    <property type="match status" value="1"/>
</dbReference>
<dbReference type="PANTHER" id="PTHR21085">
    <property type="entry name" value="CHORISMATE SYNTHASE"/>
    <property type="match status" value="1"/>
</dbReference>
<dbReference type="PANTHER" id="PTHR21085:SF0">
    <property type="entry name" value="CHORISMATE SYNTHASE"/>
    <property type="match status" value="1"/>
</dbReference>
<dbReference type="Pfam" id="PF01264">
    <property type="entry name" value="Chorismate_synt"/>
    <property type="match status" value="1"/>
</dbReference>
<dbReference type="PIRSF" id="PIRSF001456">
    <property type="entry name" value="Chorismate_synth"/>
    <property type="match status" value="1"/>
</dbReference>
<dbReference type="SUPFAM" id="SSF103263">
    <property type="entry name" value="Chorismate synthase, AroC"/>
    <property type="match status" value="1"/>
</dbReference>
<dbReference type="PROSITE" id="PS00787">
    <property type="entry name" value="CHORISMATE_SYNTHASE_1"/>
    <property type="match status" value="1"/>
</dbReference>
<dbReference type="PROSITE" id="PS00788">
    <property type="entry name" value="CHORISMATE_SYNTHASE_2"/>
    <property type="match status" value="1"/>
</dbReference>
<dbReference type="PROSITE" id="PS00789">
    <property type="entry name" value="CHORISMATE_SYNTHASE_3"/>
    <property type="match status" value="1"/>
</dbReference>